<sequence length="1240" mass="139459">MTAELKASDTEMTKPEERHLLQLLAQLEKVPHHQLEQKFVAYFKKVGKGDNQSNCTLEDFATYFLGALRQSTKRYYYSQNSETPVFPLTPIHQLKPPVADVVKEEEQQQLNESSILSRSSCSMSSTSNTTPAPQQPQGRRSTPGSGAQFCSTPNRSGGGGAGGGHSICLGNFLVNTPIQSHQRSKKKITPQKQQQNQHASLGSGTGAGATPQSKPRRRVLPMTISKNVSASSSFGDTSSFSNENNFWRISQSSEIFDRSQEAALEMEARKFLLLKKQEIKSEAPVNVSQQERTPEDEVFPEEAISLEGVANANHLQLLSTIYSLLMDLNLVPNVLRELSFVVHLLNVRDFGQSPVKSYVPSALEGLTQHKSCVYFAAKLLENQKKLLLQLDKRTLSVLLQNERLSLLPQGVVQELETHCQRRQDSTTPFAMDTSSSSQQNVYYHVENDSRDNFPSQNEFGAFKSQRDLFYKALKRWEVSHLNRGFNFPSELGPRIMDIYKKSEHPVNMTHLAKLFVNQLLISATETTESPEELGLKLDPLRHNKLAQRLVTSSSSVEGQFPRSQAFFRDFIAVCSSVAFLVHLKLELFVQLMRNNDSTFDLLQLTDDVAVEEQSAQQGPYIVRVQTMANMLILAKFLGYVTVMPFSGTTQHGNPTPPYLCPQQLQLRNHFRPDFNLREILERSMRQGKLLITLPWLVQYLAMLDLVSLHLPDAVATLELLYGLYADIRMAKLQPAAVFIARSCIGWLLDAQPQLVNGYYNYRAQEAGVGSISAIVDICLKDLSCHDKSHAPLLDELLPVACPFLQEFRVSITPSRQAKSGRFRYITTRLEQLQQNSSSISKDAIVASELSPAEQQQRKLVDAYLQSQNASTRRLIEFVTERTFKCVVKDAQQEILLPSKASADAKVNEIKSTMLEEVFQELHEIFQDARENACQRWKEHVHQMLDRRIEHSLDGLLPSSTNAVLRSTYAHLIRVQAQTQLQQWLQSSVLQSTFYHGDLQELATKVCNCNRNKADAAAAGGGGSSELQLSPDIGFSLSEFLYQLQQWLHCLSLRPEYVGSQEDLAELLRKAQKAVLLPKMPTVFYHLIGSGLVHLLQLLITRKPNFLDKDIISASCSVWRSQQLMDSKASPGIFDGLISISFVQEMANSADSFRMLETILRSMLQSGAIRADHLNELFMPLFAENWSPKVWCMLSELLQQLSLSGKDSEAHYASGDSPEDEAKSHLFMEMLADLSRDLDNF</sequence>
<gene>
    <name type="primary">dlt</name>
    <name type="synonym">VA</name>
    <name type="ORF">CG32315</name>
</gene>
<keyword id="KW-0963">Cytoplasm</keyword>
<keyword id="KW-0597">Phosphoprotein</keyword>
<keyword id="KW-1185">Reference proteome</keyword>
<comment type="function">
    <text evidence="2">Regulator of cell proliferation and cell survival of differentiated cells independent of cell division. Essential for imaginal disks formation. Not involved in cell polarity.</text>
</comment>
<comment type="subcellular location">
    <subcellularLocation>
        <location evidence="2">Cytoplasm</location>
    </subcellularLocation>
</comment>
<comment type="tissue specificity">
    <text evidence="2">Ubiquitously expressed. In larvae, it is expressed in all imaginal disks, salivary glands and weakly expressed in the gut.</text>
</comment>
<comment type="developmental stage">
    <text evidence="2">Expressed throughout embryogenesis. Expressed in larvae.</text>
</comment>
<comment type="miscellaneous">
    <text>Its transcript shares the first untranslated exon with the alpha-Spec transcript, suggesting a common regulation. It was initially identified as a candidate for quantitative trait locus (QTL) that affects olfaction. However, given that the mutant used to identify this gene also affects the alpha-Spec gene, this result is unclear.</text>
</comment>
<evidence type="ECO:0000256" key="1">
    <source>
        <dbReference type="SAM" id="MobiDB-lite"/>
    </source>
</evidence>
<evidence type="ECO:0000269" key="2">
    <source>
    </source>
</evidence>
<evidence type="ECO:0000269" key="3">
    <source>
    </source>
</evidence>
<reference key="1">
    <citation type="journal article" date="2002" name="Genetics">
        <title>Vanaso is a candidate quantitative trait gene for Drosophila olfactory behavior.</title>
        <authorList>
            <person name="Fanara J.J."/>
            <person name="Robinson K.O."/>
            <person name="Rollmann S.M."/>
            <person name="Anholt R.R.H."/>
            <person name="Mackay T.F.C."/>
        </authorList>
    </citation>
    <scope>NUCLEOTIDE SEQUENCE [GENOMIC DNA]</scope>
    <scope>VARIANTS</scope>
    <source>
        <strain>2b</strain>
        <strain>Oregon-R</strain>
    </source>
</reference>
<reference key="2">
    <citation type="journal article" date="2000" name="Science">
        <title>The genome sequence of Drosophila melanogaster.</title>
        <authorList>
            <person name="Adams M.D."/>
            <person name="Celniker S.E."/>
            <person name="Holt R.A."/>
            <person name="Evans C.A."/>
            <person name="Gocayne J.D."/>
            <person name="Amanatides P.G."/>
            <person name="Scherer S.E."/>
            <person name="Li P.W."/>
            <person name="Hoskins R.A."/>
            <person name="Galle R.F."/>
            <person name="George R.A."/>
            <person name="Lewis S.E."/>
            <person name="Richards S."/>
            <person name="Ashburner M."/>
            <person name="Henderson S.N."/>
            <person name="Sutton G.G."/>
            <person name="Wortman J.R."/>
            <person name="Yandell M.D."/>
            <person name="Zhang Q."/>
            <person name="Chen L.X."/>
            <person name="Brandon R.C."/>
            <person name="Rogers Y.-H.C."/>
            <person name="Blazej R.G."/>
            <person name="Champe M."/>
            <person name="Pfeiffer B.D."/>
            <person name="Wan K.H."/>
            <person name="Doyle C."/>
            <person name="Baxter E.G."/>
            <person name="Helt G."/>
            <person name="Nelson C.R."/>
            <person name="Miklos G.L.G."/>
            <person name="Abril J.F."/>
            <person name="Agbayani A."/>
            <person name="An H.-J."/>
            <person name="Andrews-Pfannkoch C."/>
            <person name="Baldwin D."/>
            <person name="Ballew R.M."/>
            <person name="Basu A."/>
            <person name="Baxendale J."/>
            <person name="Bayraktaroglu L."/>
            <person name="Beasley E.M."/>
            <person name="Beeson K.Y."/>
            <person name="Benos P.V."/>
            <person name="Berman B.P."/>
            <person name="Bhandari D."/>
            <person name="Bolshakov S."/>
            <person name="Borkova D."/>
            <person name="Botchan M.R."/>
            <person name="Bouck J."/>
            <person name="Brokstein P."/>
            <person name="Brottier P."/>
            <person name="Burtis K.C."/>
            <person name="Busam D.A."/>
            <person name="Butler H."/>
            <person name="Cadieu E."/>
            <person name="Center A."/>
            <person name="Chandra I."/>
            <person name="Cherry J.M."/>
            <person name="Cawley S."/>
            <person name="Dahlke C."/>
            <person name="Davenport L.B."/>
            <person name="Davies P."/>
            <person name="de Pablos B."/>
            <person name="Delcher A."/>
            <person name="Deng Z."/>
            <person name="Mays A.D."/>
            <person name="Dew I."/>
            <person name="Dietz S.M."/>
            <person name="Dodson K."/>
            <person name="Doup L.E."/>
            <person name="Downes M."/>
            <person name="Dugan-Rocha S."/>
            <person name="Dunkov B.C."/>
            <person name="Dunn P."/>
            <person name="Durbin K.J."/>
            <person name="Evangelista C.C."/>
            <person name="Ferraz C."/>
            <person name="Ferriera S."/>
            <person name="Fleischmann W."/>
            <person name="Fosler C."/>
            <person name="Gabrielian A.E."/>
            <person name="Garg N.S."/>
            <person name="Gelbart W.M."/>
            <person name="Glasser K."/>
            <person name="Glodek A."/>
            <person name="Gong F."/>
            <person name="Gorrell J.H."/>
            <person name="Gu Z."/>
            <person name="Guan P."/>
            <person name="Harris M."/>
            <person name="Harris N.L."/>
            <person name="Harvey D.A."/>
            <person name="Heiman T.J."/>
            <person name="Hernandez J.R."/>
            <person name="Houck J."/>
            <person name="Hostin D."/>
            <person name="Houston K.A."/>
            <person name="Howland T.J."/>
            <person name="Wei M.-H."/>
            <person name="Ibegwam C."/>
            <person name="Jalali M."/>
            <person name="Kalush F."/>
            <person name="Karpen G.H."/>
            <person name="Ke Z."/>
            <person name="Kennison J.A."/>
            <person name="Ketchum K.A."/>
            <person name="Kimmel B.E."/>
            <person name="Kodira C.D."/>
            <person name="Kraft C.L."/>
            <person name="Kravitz S."/>
            <person name="Kulp D."/>
            <person name="Lai Z."/>
            <person name="Lasko P."/>
            <person name="Lei Y."/>
            <person name="Levitsky A.A."/>
            <person name="Li J.H."/>
            <person name="Li Z."/>
            <person name="Liang Y."/>
            <person name="Lin X."/>
            <person name="Liu X."/>
            <person name="Mattei B."/>
            <person name="McIntosh T.C."/>
            <person name="McLeod M.P."/>
            <person name="McPherson D."/>
            <person name="Merkulov G."/>
            <person name="Milshina N.V."/>
            <person name="Mobarry C."/>
            <person name="Morris J."/>
            <person name="Moshrefi A."/>
            <person name="Mount S.M."/>
            <person name="Moy M."/>
            <person name="Murphy B."/>
            <person name="Murphy L."/>
            <person name="Muzny D.M."/>
            <person name="Nelson D.L."/>
            <person name="Nelson D.R."/>
            <person name="Nelson K.A."/>
            <person name="Nixon K."/>
            <person name="Nusskern D.R."/>
            <person name="Pacleb J.M."/>
            <person name="Palazzolo M."/>
            <person name="Pittman G.S."/>
            <person name="Pan S."/>
            <person name="Pollard J."/>
            <person name="Puri V."/>
            <person name="Reese M.G."/>
            <person name="Reinert K."/>
            <person name="Remington K."/>
            <person name="Saunders R.D.C."/>
            <person name="Scheeler F."/>
            <person name="Shen H."/>
            <person name="Shue B.C."/>
            <person name="Siden-Kiamos I."/>
            <person name="Simpson M."/>
            <person name="Skupski M.P."/>
            <person name="Smith T.J."/>
            <person name="Spier E."/>
            <person name="Spradling A.C."/>
            <person name="Stapleton M."/>
            <person name="Strong R."/>
            <person name="Sun E."/>
            <person name="Svirskas R."/>
            <person name="Tector C."/>
            <person name="Turner R."/>
            <person name="Venter E."/>
            <person name="Wang A.H."/>
            <person name="Wang X."/>
            <person name="Wang Z.-Y."/>
            <person name="Wassarman D.A."/>
            <person name="Weinstock G.M."/>
            <person name="Weissenbach J."/>
            <person name="Williams S.M."/>
            <person name="Woodage T."/>
            <person name="Worley K.C."/>
            <person name="Wu D."/>
            <person name="Yang S."/>
            <person name="Yao Q.A."/>
            <person name="Ye J."/>
            <person name="Yeh R.-F."/>
            <person name="Zaveri J.S."/>
            <person name="Zhan M."/>
            <person name="Zhang G."/>
            <person name="Zhao Q."/>
            <person name="Zheng L."/>
            <person name="Zheng X.H."/>
            <person name="Zhong F.N."/>
            <person name="Zhong W."/>
            <person name="Zhou X."/>
            <person name="Zhu S.C."/>
            <person name="Zhu X."/>
            <person name="Smith H.O."/>
            <person name="Gibbs R.A."/>
            <person name="Myers E.W."/>
            <person name="Rubin G.M."/>
            <person name="Venter J.C."/>
        </authorList>
    </citation>
    <scope>NUCLEOTIDE SEQUENCE [LARGE SCALE GENOMIC DNA]</scope>
    <source>
        <strain>Berkeley</strain>
    </source>
</reference>
<reference key="3">
    <citation type="journal article" date="2002" name="Genome Biol.">
        <title>Annotation of the Drosophila melanogaster euchromatic genome: a systematic review.</title>
        <authorList>
            <person name="Misra S."/>
            <person name="Crosby M.A."/>
            <person name="Mungall C.J."/>
            <person name="Matthews B.B."/>
            <person name="Campbell K.S."/>
            <person name="Hradecky P."/>
            <person name="Huang Y."/>
            <person name="Kaminker J.S."/>
            <person name="Millburn G.H."/>
            <person name="Prochnik S.E."/>
            <person name="Smith C.D."/>
            <person name="Tupy J.L."/>
            <person name="Whitfield E.J."/>
            <person name="Bayraktaroglu L."/>
            <person name="Berman B.P."/>
            <person name="Bettencourt B.R."/>
            <person name="Celniker S.E."/>
            <person name="de Grey A.D.N.J."/>
            <person name="Drysdale R.A."/>
            <person name="Harris N.L."/>
            <person name="Richter J."/>
            <person name="Russo S."/>
            <person name="Schroeder A.J."/>
            <person name="Shu S.Q."/>
            <person name="Stapleton M."/>
            <person name="Yamada C."/>
            <person name="Ashburner M."/>
            <person name="Gelbart W.M."/>
            <person name="Rubin G.M."/>
            <person name="Lewis S.E."/>
        </authorList>
    </citation>
    <scope>GENOME REANNOTATION</scope>
    <source>
        <strain>Berkeley</strain>
    </source>
</reference>
<reference key="4">
    <citation type="journal article" date="2002" name="Genome Biol.">
        <title>A Drosophila full-length cDNA resource.</title>
        <authorList>
            <person name="Stapleton M."/>
            <person name="Carlson J.W."/>
            <person name="Brokstein P."/>
            <person name="Yu C."/>
            <person name="Champe M."/>
            <person name="George R.A."/>
            <person name="Guarin H."/>
            <person name="Kronmiller B."/>
            <person name="Pacleb J.M."/>
            <person name="Park S."/>
            <person name="Wan K.H."/>
            <person name="Rubin G.M."/>
            <person name="Celniker S.E."/>
        </authorList>
    </citation>
    <scope>NUCLEOTIDE SEQUENCE [LARGE SCALE MRNA]</scope>
    <source>
        <strain>Berkeley</strain>
        <tissue>Embryo</tissue>
    </source>
</reference>
<reference key="5">
    <citation type="journal article" date="2003" name="Dev. Cell">
        <title>The Drosophila cell survival gene discs lost encodes a cytoplasmic Codanin-1-like protein, not a homolog of tight junction PDZ protein Patj.</title>
        <authorList>
            <person name="Pielage J."/>
            <person name="Stork T."/>
            <person name="Bunse I."/>
            <person name="Klaembt C."/>
        </authorList>
    </citation>
    <scope>FUNCTION</scope>
    <scope>SUBCELLULAR LOCATION</scope>
    <scope>TISSUE SPECIFICITY</scope>
    <scope>DEVELOPMENTAL STAGE</scope>
</reference>
<reference key="6">
    <citation type="journal article" date="2008" name="J. Proteome Res.">
        <title>Phosphoproteome analysis of Drosophila melanogaster embryos.</title>
        <authorList>
            <person name="Zhai B."/>
            <person name="Villen J."/>
            <person name="Beausoleil S.A."/>
            <person name="Mintseris J."/>
            <person name="Gygi S.P."/>
        </authorList>
    </citation>
    <scope>PHOSPHORYLATION [LARGE SCALE ANALYSIS] AT SER-156; SER-166 AND SER-1234</scope>
    <scope>IDENTIFICATION BY MASS SPECTROMETRY</scope>
    <source>
        <tissue>Embryo</tissue>
    </source>
</reference>
<name>DLT_DROME</name>
<protein>
    <recommendedName>
        <fullName>Protein disks lost</fullName>
    </recommendedName>
    <alternativeName>
        <fullName>Codanin 1 homolog</fullName>
    </alternativeName>
    <alternativeName>
        <fullName>Protein vanaso</fullName>
    </alternativeName>
</protein>
<dbReference type="EMBL" id="AF487674">
    <property type="protein sequence ID" value="AAM18043.1"/>
    <property type="molecule type" value="Genomic_DNA"/>
</dbReference>
<dbReference type="EMBL" id="AF487677">
    <property type="protein sequence ID" value="AAM18044.1"/>
    <property type="molecule type" value="Genomic_DNA"/>
</dbReference>
<dbReference type="EMBL" id="AE014296">
    <property type="protein sequence ID" value="AAF47570.1"/>
    <property type="molecule type" value="Genomic_DNA"/>
</dbReference>
<dbReference type="EMBL" id="AY051770">
    <property type="protein sequence ID" value="AAK93194.1"/>
    <property type="molecule type" value="mRNA"/>
</dbReference>
<dbReference type="RefSeq" id="NP_728672.1">
    <property type="nucleotide sequence ID" value="NM_167916.3"/>
</dbReference>
<dbReference type="SMR" id="Q8T626"/>
<dbReference type="BioGRID" id="70341">
    <property type="interactions" value="3"/>
</dbReference>
<dbReference type="DIP" id="DIP-22407N"/>
<dbReference type="FunCoup" id="Q8T626">
    <property type="interactions" value="2216"/>
</dbReference>
<dbReference type="IntAct" id="Q8T626">
    <property type="interactions" value="12"/>
</dbReference>
<dbReference type="MINT" id="Q8T626"/>
<dbReference type="STRING" id="7227.FBpp0072673"/>
<dbReference type="iPTMnet" id="Q8T626"/>
<dbReference type="PaxDb" id="7227-FBpp0072673"/>
<dbReference type="EnsemblMetazoa" id="FBtr0072790">
    <property type="protein sequence ID" value="FBpp0072673"/>
    <property type="gene ID" value="FBgn0024510"/>
</dbReference>
<dbReference type="GeneID" id="46719"/>
<dbReference type="KEGG" id="dme:Dmel_CG32315"/>
<dbReference type="AGR" id="FB:FBgn0024510"/>
<dbReference type="CTD" id="46719"/>
<dbReference type="FlyBase" id="FBgn0024510">
    <property type="gene designation" value="dlt"/>
</dbReference>
<dbReference type="VEuPathDB" id="VectorBase:FBgn0024510"/>
<dbReference type="eggNOG" id="ENOG502QPWR">
    <property type="taxonomic scope" value="Eukaryota"/>
</dbReference>
<dbReference type="HOGENOM" id="CLU_007271_0_0_1"/>
<dbReference type="InParanoid" id="Q8T626"/>
<dbReference type="OMA" id="CVVKDAQ"/>
<dbReference type="OrthoDB" id="20982at2759"/>
<dbReference type="PhylomeDB" id="Q8T626"/>
<dbReference type="SignaLink" id="Q8T626"/>
<dbReference type="BioGRID-ORCS" id="46719">
    <property type="hits" value="0 hits in 1 CRISPR screen"/>
</dbReference>
<dbReference type="ChiTaRS" id="COX5A">
    <property type="organism name" value="fly"/>
</dbReference>
<dbReference type="GenomeRNAi" id="46719"/>
<dbReference type="PRO" id="PR:Q8T626"/>
<dbReference type="Proteomes" id="UP000000803">
    <property type="component" value="Chromosome 3L"/>
</dbReference>
<dbReference type="Bgee" id="FBgn0024510">
    <property type="expression patterns" value="Expressed in adult differentiating enterocyte in digestive tract and 40 other cell types or tissues"/>
</dbReference>
<dbReference type="GO" id="GO:0005737">
    <property type="term" value="C:cytoplasm"/>
    <property type="evidence" value="ECO:0000314"/>
    <property type="project" value="UniProtKB"/>
</dbReference>
<dbReference type="GO" id="GO:0005634">
    <property type="term" value="C:nucleus"/>
    <property type="evidence" value="ECO:0000318"/>
    <property type="project" value="GO_Central"/>
</dbReference>
<dbReference type="GO" id="GO:0006325">
    <property type="term" value="P:chromatin organization"/>
    <property type="evidence" value="ECO:0000318"/>
    <property type="project" value="GO_Central"/>
</dbReference>
<dbReference type="GO" id="GO:0007560">
    <property type="term" value="P:imaginal disc morphogenesis"/>
    <property type="evidence" value="ECO:0000315"/>
    <property type="project" value="UniProtKB"/>
</dbReference>
<dbReference type="GO" id="GO:0001738">
    <property type="term" value="P:morphogenesis of a polarized epithelium"/>
    <property type="evidence" value="ECO:0000304"/>
    <property type="project" value="FlyBase"/>
</dbReference>
<dbReference type="GO" id="GO:0042048">
    <property type="term" value="P:olfactory behavior"/>
    <property type="evidence" value="ECO:0000270"/>
    <property type="project" value="FlyBase"/>
</dbReference>
<dbReference type="GO" id="GO:0042127">
    <property type="term" value="P:regulation of cell population proliferation"/>
    <property type="evidence" value="ECO:0000315"/>
    <property type="project" value="UniProtKB"/>
</dbReference>
<dbReference type="InterPro" id="IPR040031">
    <property type="entry name" value="Codanin-1"/>
</dbReference>
<dbReference type="InterPro" id="IPR028171">
    <property type="entry name" value="Codanin-1_C"/>
</dbReference>
<dbReference type="PANTHER" id="PTHR28678">
    <property type="entry name" value="CODANIN-1"/>
    <property type="match status" value="1"/>
</dbReference>
<dbReference type="PANTHER" id="PTHR28678:SF1">
    <property type="entry name" value="CODANIN-1"/>
    <property type="match status" value="1"/>
</dbReference>
<dbReference type="Pfam" id="PF15296">
    <property type="entry name" value="Codanin-1_C"/>
    <property type="match status" value="1"/>
</dbReference>
<organism>
    <name type="scientific">Drosophila melanogaster</name>
    <name type="common">Fruit fly</name>
    <dbReference type="NCBI Taxonomy" id="7227"/>
    <lineage>
        <taxon>Eukaryota</taxon>
        <taxon>Metazoa</taxon>
        <taxon>Ecdysozoa</taxon>
        <taxon>Arthropoda</taxon>
        <taxon>Hexapoda</taxon>
        <taxon>Insecta</taxon>
        <taxon>Pterygota</taxon>
        <taxon>Neoptera</taxon>
        <taxon>Endopterygota</taxon>
        <taxon>Diptera</taxon>
        <taxon>Brachycera</taxon>
        <taxon>Muscomorpha</taxon>
        <taxon>Ephydroidea</taxon>
        <taxon>Drosophilidae</taxon>
        <taxon>Drosophila</taxon>
        <taxon>Sophophora</taxon>
    </lineage>
</organism>
<proteinExistence type="evidence at protein level"/>
<feature type="chain" id="PRO_0000079934" description="Protein disks lost">
    <location>
        <begin position="1"/>
        <end position="1240"/>
    </location>
</feature>
<feature type="region of interest" description="Disordered" evidence="1">
    <location>
        <begin position="105"/>
        <end position="162"/>
    </location>
</feature>
<feature type="region of interest" description="Disordered" evidence="1">
    <location>
        <begin position="179"/>
        <end position="218"/>
    </location>
</feature>
<feature type="compositionally biased region" description="Low complexity" evidence="1">
    <location>
        <begin position="113"/>
        <end position="127"/>
    </location>
</feature>
<feature type="compositionally biased region" description="Polar residues" evidence="1">
    <location>
        <begin position="128"/>
        <end position="155"/>
    </location>
</feature>
<feature type="modified residue" description="Phosphoserine" evidence="3">
    <location>
        <position position="156"/>
    </location>
</feature>
<feature type="modified residue" description="Phosphoserine" evidence="3">
    <location>
        <position position="166"/>
    </location>
</feature>
<feature type="modified residue" description="Phosphoserine" evidence="3">
    <location>
        <position position="1234"/>
    </location>
</feature>
<feature type="sequence variant" description="In strain: Oregon-R.">
    <original>P</original>
    <variation>T</variation>
    <location>
        <position position="136"/>
    </location>
</feature>
<feature type="sequence variant" description="In strain: Oregon-R.">
    <original>A</original>
    <variation>V</variation>
    <location>
        <position position="209"/>
    </location>
</feature>
<feature type="sequence variant" description="In strain: Oregon-R.">
    <original>Y</original>
    <variation>C</variation>
    <location>
        <position position="358"/>
    </location>
</feature>
<feature type="sequence variant" description="In strain: 2b.">
    <original>V</original>
    <variation>I</variation>
    <location>
        <position position="411"/>
    </location>
</feature>
<feature type="sequence variant" description="In strain: 2b.">
    <original>H</original>
    <variation>Y</variation>
    <location>
        <position position="418"/>
    </location>
</feature>
<feature type="sequence variant" description="In strain: 2b and Oregon-R.">
    <original>S</original>
    <variation>L</variation>
    <location>
        <position position="425"/>
    </location>
</feature>
<feature type="sequence variant" description="In strain: Oregon-R.">
    <original>P</original>
    <variation>T</variation>
    <location>
        <position position="734"/>
    </location>
</feature>
<feature type="sequence variant" description="In strain: Oregon-R.">
    <original>S</original>
    <variation>A</variation>
    <location>
        <position position="958"/>
    </location>
</feature>
<feature type="sequence variant" description="In strain: Oregon-R.">
    <original>K</original>
    <variation>R</variation>
    <location>
        <position position="1069"/>
    </location>
</feature>
<feature type="sequence variant" description="In strain: Oregon-R.">
    <original>A</original>
    <variation>G</variation>
    <location>
        <position position="1146"/>
    </location>
</feature>
<feature type="sequence variant" description="In strain: Oregon-R.">
    <original>A</original>
    <variation>T</variation>
    <location>
        <position position="1167"/>
    </location>
</feature>
<feature type="sequence variant" description="In strain: 2b.">
    <original>A</original>
    <variation>D</variation>
    <location>
        <position position="1209"/>
    </location>
</feature>
<accession>Q8T626</accession>
<accession>Q8T627</accession>
<accession>Q9W084</accession>